<keyword id="KW-1185">Reference proteome</keyword>
<gene>
    <name type="ordered locus">MIMI_L87</name>
</gene>
<dbReference type="EMBL" id="AY653733">
    <property type="protein sequence ID" value="AAV50362.1"/>
    <property type="molecule type" value="Genomic_DNA"/>
</dbReference>
<dbReference type="KEGG" id="vg:9924685"/>
<dbReference type="OrthoDB" id="35931at10239"/>
<dbReference type="Proteomes" id="UP000001134">
    <property type="component" value="Genome"/>
</dbReference>
<feature type="chain" id="PRO_0000071206" description="Uncharacterized protein L87">
    <location>
        <begin position="1"/>
        <end position="171"/>
    </location>
</feature>
<sequence>METFEDGQLGVLTRPIRGYRAIDCYSQKIYRESKQKNWIRAISTLRVDTGSTVLMIKGPNNSNLFNTSQVYVENIEDFRGNPISDDFECQSSAMAYPIKNFYNKDKKQLDIGIDFFEDWTFDVQVTFYYKHIYKKNQFIKSPLTKTNNYSIMNLDGFYLFLDKSQAMTSDI</sequence>
<accession>Q5UPF9</accession>
<proteinExistence type="inferred from homology"/>
<organismHost>
    <name type="scientific">Acanthamoeba polyphaga</name>
    <name type="common">Amoeba</name>
    <dbReference type="NCBI Taxonomy" id="5757"/>
</organismHost>
<name>YL087_MIMIV</name>
<protein>
    <recommendedName>
        <fullName>Uncharacterized protein L87</fullName>
    </recommendedName>
</protein>
<comment type="similarity">
    <text evidence="1">Belongs to the mimivirus L87/L94 family.</text>
</comment>
<reference key="1">
    <citation type="journal article" date="2004" name="Science">
        <title>The 1.2-megabase genome sequence of Mimivirus.</title>
        <authorList>
            <person name="Raoult D."/>
            <person name="Audic S."/>
            <person name="Robert C."/>
            <person name="Abergel C."/>
            <person name="Renesto P."/>
            <person name="Ogata H."/>
            <person name="La Scola B."/>
            <person name="Susan M."/>
            <person name="Claverie J.-M."/>
        </authorList>
    </citation>
    <scope>NUCLEOTIDE SEQUENCE [LARGE SCALE GENOMIC DNA]</scope>
    <source>
        <strain>Rowbotham-Bradford</strain>
    </source>
</reference>
<evidence type="ECO:0000305" key="1"/>
<organism>
    <name type="scientific">Acanthamoeba polyphaga mimivirus</name>
    <name type="common">APMV</name>
    <dbReference type="NCBI Taxonomy" id="212035"/>
    <lineage>
        <taxon>Viruses</taxon>
        <taxon>Varidnaviria</taxon>
        <taxon>Bamfordvirae</taxon>
        <taxon>Nucleocytoviricota</taxon>
        <taxon>Megaviricetes</taxon>
        <taxon>Imitervirales</taxon>
        <taxon>Mimiviridae</taxon>
        <taxon>Megamimivirinae</taxon>
        <taxon>Mimivirus</taxon>
        <taxon>Mimivirus bradfordmassiliense</taxon>
    </lineage>
</organism>